<gene>
    <name type="primary">Sgms2</name>
</gene>
<proteinExistence type="evidence at protein level"/>
<dbReference type="EC" id="2.7.8.27" evidence="2"/>
<dbReference type="EMBL" id="DQ071571">
    <property type="protein sequence ID" value="AAY84706.2"/>
    <property type="molecule type" value="mRNA"/>
</dbReference>
<dbReference type="EMBL" id="BC085803">
    <property type="protein sequence ID" value="AAH85803.1"/>
    <property type="molecule type" value="mRNA"/>
</dbReference>
<dbReference type="RefSeq" id="NP_001014065.1">
    <property type="nucleotide sequence ID" value="NM_001014043.1"/>
</dbReference>
<dbReference type="RefSeq" id="XP_006233373.1">
    <property type="nucleotide sequence ID" value="XM_006233311.3"/>
</dbReference>
<dbReference type="RefSeq" id="XP_008759723.1">
    <property type="nucleotide sequence ID" value="XM_008761501.1"/>
</dbReference>
<dbReference type="RefSeq" id="XP_017446423.1">
    <property type="nucleotide sequence ID" value="XM_017590934.1"/>
</dbReference>
<dbReference type="SMR" id="Q4JM44"/>
<dbReference type="FunCoup" id="Q4JM44">
    <property type="interactions" value="260"/>
</dbReference>
<dbReference type="STRING" id="10116.ENSRNOP00000015020"/>
<dbReference type="PhosphoSitePlus" id="Q4JM44"/>
<dbReference type="PaxDb" id="10116-ENSRNOP00000015020"/>
<dbReference type="GeneID" id="310849"/>
<dbReference type="KEGG" id="rno:310849"/>
<dbReference type="AGR" id="RGD:1305778"/>
<dbReference type="CTD" id="166929"/>
<dbReference type="RGD" id="1305778">
    <property type="gene designation" value="Sgms2"/>
</dbReference>
<dbReference type="eggNOG" id="KOG3058">
    <property type="taxonomic scope" value="Eukaryota"/>
</dbReference>
<dbReference type="InParanoid" id="Q4JM44"/>
<dbReference type="OrthoDB" id="422827at2759"/>
<dbReference type="PhylomeDB" id="Q4JM44"/>
<dbReference type="TreeFam" id="TF314547"/>
<dbReference type="BRENDA" id="2.7.8.27">
    <property type="organism ID" value="5301"/>
</dbReference>
<dbReference type="Reactome" id="R-RNO-1660661">
    <property type="pathway name" value="Sphingolipid de novo biosynthesis"/>
</dbReference>
<dbReference type="PRO" id="PR:Q4JM44"/>
<dbReference type="Proteomes" id="UP000002494">
    <property type="component" value="Unplaced"/>
</dbReference>
<dbReference type="GO" id="GO:0005789">
    <property type="term" value="C:endoplasmic reticulum membrane"/>
    <property type="evidence" value="ECO:0000318"/>
    <property type="project" value="GO_Central"/>
</dbReference>
<dbReference type="GO" id="GO:0000139">
    <property type="term" value="C:Golgi membrane"/>
    <property type="evidence" value="ECO:0000266"/>
    <property type="project" value="RGD"/>
</dbReference>
<dbReference type="GO" id="GO:0005886">
    <property type="term" value="C:plasma membrane"/>
    <property type="evidence" value="ECO:0000314"/>
    <property type="project" value="UniProtKB"/>
</dbReference>
<dbReference type="GO" id="GO:0047493">
    <property type="term" value="F:ceramide cholinephosphotransferase activity"/>
    <property type="evidence" value="ECO:0000266"/>
    <property type="project" value="RGD"/>
</dbReference>
<dbReference type="GO" id="GO:0002950">
    <property type="term" value="F:ceramide phosphoethanolamine synthase activity"/>
    <property type="evidence" value="ECO:0000266"/>
    <property type="project" value="RGD"/>
</dbReference>
<dbReference type="GO" id="GO:0016301">
    <property type="term" value="F:kinase activity"/>
    <property type="evidence" value="ECO:0007669"/>
    <property type="project" value="UniProtKB-KW"/>
</dbReference>
<dbReference type="GO" id="GO:0033188">
    <property type="term" value="F:sphingomyelin synthase activity"/>
    <property type="evidence" value="ECO:0000266"/>
    <property type="project" value="RGD"/>
</dbReference>
<dbReference type="GO" id="GO:0046513">
    <property type="term" value="P:ceramide biosynthetic process"/>
    <property type="evidence" value="ECO:0000266"/>
    <property type="project" value="RGD"/>
</dbReference>
<dbReference type="GO" id="GO:1905373">
    <property type="term" value="P:ceramide phosphoethanolamine biosynthetic process"/>
    <property type="evidence" value="ECO:0000266"/>
    <property type="project" value="RGD"/>
</dbReference>
<dbReference type="GO" id="GO:0030500">
    <property type="term" value="P:regulation of bone mineralization"/>
    <property type="evidence" value="ECO:0000250"/>
    <property type="project" value="UniProtKB"/>
</dbReference>
<dbReference type="GO" id="GO:0006686">
    <property type="term" value="P:sphingomyelin biosynthetic process"/>
    <property type="evidence" value="ECO:0000266"/>
    <property type="project" value="RGD"/>
</dbReference>
<dbReference type="CDD" id="cd01610">
    <property type="entry name" value="PAP2_like"/>
    <property type="match status" value="1"/>
</dbReference>
<dbReference type="InterPro" id="IPR045221">
    <property type="entry name" value="Sphingomyelin_synth-like"/>
</dbReference>
<dbReference type="InterPro" id="IPR025749">
    <property type="entry name" value="Sphingomyelin_synth-like_dom"/>
</dbReference>
<dbReference type="PANTHER" id="PTHR21290:SF24">
    <property type="entry name" value="PHOSPHATIDYLCHOLINE:CERAMIDE CHOLINEPHOSPHOTRANSFERASE 2"/>
    <property type="match status" value="1"/>
</dbReference>
<dbReference type="PANTHER" id="PTHR21290">
    <property type="entry name" value="SPHINGOMYELIN SYNTHETASE"/>
    <property type="match status" value="1"/>
</dbReference>
<dbReference type="Pfam" id="PF14360">
    <property type="entry name" value="PAP2_C"/>
    <property type="match status" value="1"/>
</dbReference>
<keyword id="KW-1003">Cell membrane</keyword>
<keyword id="KW-0333">Golgi apparatus</keyword>
<keyword id="KW-0418">Kinase</keyword>
<keyword id="KW-0443">Lipid metabolism</keyword>
<keyword id="KW-0449">Lipoprotein</keyword>
<keyword id="KW-0472">Membrane</keyword>
<keyword id="KW-0564">Palmitate</keyword>
<keyword id="KW-1185">Reference proteome</keyword>
<keyword id="KW-0746">Sphingolipid metabolism</keyword>
<keyword id="KW-0808">Transferase</keyword>
<keyword id="KW-0812">Transmembrane</keyword>
<keyword id="KW-1133">Transmembrane helix</keyword>
<name>SMS2_RAT</name>
<accession>Q4JM44</accession>
<accession>Q5U2Z1</accession>
<protein>
    <recommendedName>
        <fullName>Phosphatidylcholine:ceramide cholinephosphotransferase 2</fullName>
        <ecNumber evidence="2">2.7.8.27</ecNumber>
    </recommendedName>
    <alternativeName>
        <fullName>Sphingomyelin synthase 2</fullName>
        <shortName>Sms2</shortName>
    </alternativeName>
</protein>
<sequence length="365" mass="42223">MDIIETAKLEGHLESQTNNSTNTYTSPTEAVEEEDKNGKGKPKTLSNGLRKGAKKYPDYIQISMPNDSRNKLPLEWWKTGIAFVYALFNLILTTVMITVVHERVPPKELSPPLPDKFFDYVDRVKWAFSVSEINGMVLVGLWLTQWLFLRYKSIVGRRFFFIMGTLYLYRCITMYVTTLPVPGMHFQCAPKLNGDSQAKIQRILRLLSGGGLSITGSHILCGDFLFSGHTVVLTLTYLFIKEYSPRHFWWYHLVCWLLSAAGIICILVAHEHYTVDVIIAYYITTRLFWWYHSMANEKNLKVSSQTNFLSRAWWFPIFYFFEKNVQGSIPCCFSWPLSWPPGCFKSSCKKYSRVQKIGEDNEKST</sequence>
<reference key="1">
    <citation type="journal article" date="2007" name="J. Endocrinol.">
        <title>Cellular localization of sphingomyelin synthase 2 in the seminiferous epithelium of adult rat testes.</title>
        <authorList>
            <person name="Lee N.P.Y."/>
            <person name="Mruk D.D."/>
            <person name="Xia W."/>
            <person name="Cheng C.Y."/>
        </authorList>
    </citation>
    <scope>NUCLEOTIDE SEQUENCE [MRNA]</scope>
    <scope>SUBCELLULAR LOCATION</scope>
    <scope>TISSUE SPECIFICITY</scope>
    <source>
        <strain>Sprague-Dawley</strain>
        <tissue>Testis</tissue>
    </source>
</reference>
<reference key="2">
    <citation type="journal article" date="2004" name="Genome Res.">
        <title>The status, quality, and expansion of the NIH full-length cDNA project: the Mammalian Gene Collection (MGC).</title>
        <authorList>
            <consortium name="The MGC Project Team"/>
        </authorList>
    </citation>
    <scope>NUCLEOTIDE SEQUENCE [LARGE SCALE MRNA]</scope>
    <source>
        <strain>Brown Norway</strain>
        <tissue>Testis</tissue>
    </source>
</reference>
<reference key="3">
    <citation type="journal article" date="2011" name="PLoS ONE">
        <title>Sphingomyelin synthases regulate protein trafficking and secretion.</title>
        <authorList>
            <person name="Subathra M."/>
            <person name="Qureshi A."/>
            <person name="Luberto C."/>
        </authorList>
    </citation>
    <scope>FUNCTION</scope>
</reference>
<organism>
    <name type="scientific">Rattus norvegicus</name>
    <name type="common">Rat</name>
    <dbReference type="NCBI Taxonomy" id="10116"/>
    <lineage>
        <taxon>Eukaryota</taxon>
        <taxon>Metazoa</taxon>
        <taxon>Chordata</taxon>
        <taxon>Craniata</taxon>
        <taxon>Vertebrata</taxon>
        <taxon>Euteleostomi</taxon>
        <taxon>Mammalia</taxon>
        <taxon>Eutheria</taxon>
        <taxon>Euarchontoglires</taxon>
        <taxon>Glires</taxon>
        <taxon>Rodentia</taxon>
        <taxon>Myomorpha</taxon>
        <taxon>Muroidea</taxon>
        <taxon>Muridae</taxon>
        <taxon>Murinae</taxon>
        <taxon>Rattus</taxon>
    </lineage>
</organism>
<feature type="chain" id="PRO_0000290123" description="Phosphatidylcholine:ceramide cholinephosphotransferase 2">
    <location>
        <begin position="1"/>
        <end position="365"/>
    </location>
</feature>
<feature type="transmembrane region" description="Helical" evidence="4">
    <location>
        <begin position="80"/>
        <end position="100"/>
    </location>
</feature>
<feature type="transmembrane region" description="Helical" evidence="4">
    <location>
        <begin position="128"/>
        <end position="148"/>
    </location>
</feature>
<feature type="transmembrane region" description="Helical" evidence="4">
    <location>
        <begin position="159"/>
        <end position="179"/>
    </location>
</feature>
<feature type="transmembrane region" description="Helical" evidence="4">
    <location>
        <begin position="219"/>
        <end position="239"/>
    </location>
</feature>
<feature type="transmembrane region" description="Helical" evidence="4">
    <location>
        <begin position="248"/>
        <end position="268"/>
    </location>
</feature>
<feature type="transmembrane region" description="Helical" evidence="4">
    <location>
        <begin position="273"/>
        <end position="290"/>
    </location>
</feature>
<feature type="topological domain" description="Cytoplasmic" evidence="4">
    <location>
        <begin position="291"/>
        <end position="365"/>
    </location>
</feature>
<feature type="region of interest" description="Disordered" evidence="5">
    <location>
        <begin position="9"/>
        <end position="50"/>
    </location>
</feature>
<feature type="compositionally biased region" description="Low complexity" evidence="5">
    <location>
        <begin position="15"/>
        <end position="28"/>
    </location>
</feature>
<feature type="active site" evidence="1">
    <location>
        <position position="229"/>
    </location>
</feature>
<feature type="active site" evidence="1">
    <location>
        <position position="272"/>
    </location>
</feature>
<feature type="active site" evidence="1">
    <location>
        <position position="276"/>
    </location>
</feature>
<feature type="lipid moiety-binding region" description="S-palmitoyl cysteine" evidence="1">
    <location>
        <position position="331"/>
    </location>
</feature>
<feature type="lipid moiety-binding region" description="S-palmitoyl cysteine" evidence="1">
    <location>
        <position position="332"/>
    </location>
</feature>
<feature type="lipid moiety-binding region" description="S-palmitoyl cysteine" evidence="1">
    <location>
        <position position="343"/>
    </location>
</feature>
<feature type="lipid moiety-binding region" description="S-palmitoyl cysteine" evidence="1">
    <location>
        <position position="348"/>
    </location>
</feature>
<feature type="sequence conflict" description="In Ref. 2; AAH85803." evidence="8" ref="2">
    <original>I</original>
    <variation>V</variation>
    <location>
        <position position="264"/>
    </location>
</feature>
<comment type="function">
    <text evidence="2 7">Sphingomyelin synthase that primarily contributes to sphingomyelin synthesis and homeostasis at the plasma membrane. Catalyzes the reversible transfer of phosphocholine moiety in sphingomyelin biosynthesis: in the forward reaction transfers phosphocholine head group of phosphatidylcholine (PC) on to ceramide (CER) to form ceramide phosphocholine (sphingomyelin, SM) and diacylglycerol (DAG) as by-product, and in the reverse reaction transfers phosphocholine from SM to DAG to form PC and CER. The direction of the reaction appears to depend on the levels of CER and DAG in the plasma membrane (By similarity). Does not use free phosphorylcholine or CDP-choline as donors (By similarity). Can also transfer phosphoethanolamine head group of phosphatidylethanolamine (PE) on to ceramide (CER) to form ceramide phosphoethanolamine (CPE) (By similarity). Regulates receptor-mediated signal transduction via mitogenic DAG and proapoptotic CER, as well as via SM, a structural component of membrane rafts that serve as platforms for signal transduction and protein sorting (By similarity). To a lesser extent, plays a role in secretory transport via regulation of DAG pool at the Golgi apparatus and its downstream effects on PRKD1 (PubMed:21980337). Required for normal bone matrix mineralization (By similarity).</text>
</comment>
<comment type="catalytic activity">
    <reaction evidence="2">
        <text>an N-acylsphing-4-enine + a 1,2-diacyl-sn-glycero-3-phosphocholine = a sphingomyelin + a 1,2-diacyl-sn-glycerol</text>
        <dbReference type="Rhea" id="RHEA:18765"/>
        <dbReference type="ChEBI" id="CHEBI:17636"/>
        <dbReference type="ChEBI" id="CHEBI:17815"/>
        <dbReference type="ChEBI" id="CHEBI:52639"/>
        <dbReference type="ChEBI" id="CHEBI:57643"/>
        <dbReference type="EC" id="2.7.8.27"/>
    </reaction>
    <physiologicalReaction direction="left-to-right" evidence="2">
        <dbReference type="Rhea" id="RHEA:18766"/>
    </physiologicalReaction>
    <physiologicalReaction direction="right-to-left" evidence="2">
        <dbReference type="Rhea" id="RHEA:18767"/>
    </physiologicalReaction>
</comment>
<comment type="catalytic activity">
    <reaction evidence="2">
        <text>an N-acylsphinganine + a 1,2-diacyl-sn-glycero-3-phosphocholine = an N-acylsphinganine-1-phosphocholine + a 1,2-diacyl-sn-glycerol</text>
        <dbReference type="Rhea" id="RHEA:44620"/>
        <dbReference type="ChEBI" id="CHEBI:17815"/>
        <dbReference type="ChEBI" id="CHEBI:31488"/>
        <dbReference type="ChEBI" id="CHEBI:57643"/>
        <dbReference type="ChEBI" id="CHEBI:67090"/>
    </reaction>
    <physiologicalReaction direction="left-to-right" evidence="2">
        <dbReference type="Rhea" id="RHEA:44621"/>
    </physiologicalReaction>
    <physiologicalReaction direction="right-to-left" evidence="2">
        <dbReference type="Rhea" id="RHEA:44622"/>
    </physiologicalReaction>
</comment>
<comment type="catalytic activity">
    <reaction evidence="2">
        <text>an N-acyl-(4R)-4-hydroxysphinganine + a 1,2-diacyl-sn-glycero-3-phosphocholine = an N-acyl-(4R)-4-hydroxysphinganine-phosphocholine + a 1,2-diacyl-sn-glycerol</text>
        <dbReference type="Rhea" id="RHEA:42152"/>
        <dbReference type="ChEBI" id="CHEBI:17815"/>
        <dbReference type="ChEBI" id="CHEBI:31998"/>
        <dbReference type="ChEBI" id="CHEBI:57643"/>
        <dbReference type="ChEBI" id="CHEBI:78651"/>
    </reaction>
    <physiologicalReaction direction="left-to-right" evidence="2">
        <dbReference type="Rhea" id="RHEA:42153"/>
    </physiologicalReaction>
    <physiologicalReaction direction="right-to-left" evidence="2">
        <dbReference type="Rhea" id="RHEA:42154"/>
    </physiologicalReaction>
</comment>
<comment type="catalytic activity">
    <reaction evidence="3">
        <text>an N-acylsphing-4-enine + a 1,2-diacyl-sn-glycero-3-phosphoethanolamine = an N-acylsphing-4-enine 1-phosphoethanolamine + a 1,2-diacyl-sn-glycerol</text>
        <dbReference type="Rhea" id="RHEA:36079"/>
        <dbReference type="ChEBI" id="CHEBI:17815"/>
        <dbReference type="ChEBI" id="CHEBI:52639"/>
        <dbReference type="ChEBI" id="CHEBI:64612"/>
        <dbReference type="ChEBI" id="CHEBI:73203"/>
    </reaction>
    <physiologicalReaction direction="left-to-right" evidence="3">
        <dbReference type="Rhea" id="RHEA:36080"/>
    </physiologicalReaction>
</comment>
<comment type="catalytic activity">
    <reaction evidence="2">
        <text>an N-acylsphinganine + a 1,2-diacyl-sn-glycero-3-phosphoethanolamine = an N-acylsphinganine-1-phosphoethanolamine + a 1,2-diacyl-sn-glycerol</text>
        <dbReference type="Rhea" id="RHEA:42136"/>
        <dbReference type="ChEBI" id="CHEBI:17815"/>
        <dbReference type="ChEBI" id="CHEBI:31488"/>
        <dbReference type="ChEBI" id="CHEBI:64612"/>
        <dbReference type="ChEBI" id="CHEBI:78655"/>
    </reaction>
    <physiologicalReaction direction="left-to-right" evidence="2">
        <dbReference type="Rhea" id="RHEA:42137"/>
    </physiologicalReaction>
</comment>
<comment type="catalytic activity">
    <reaction evidence="2">
        <text>an N-acyl-(4R)-4-hydroxysphinganine + a 1,2-diacyl-sn-glycero-3-phosphoethanolamine = an N-acyl-(4R)-4-hydroxysphinganine-1-phosphoethanolamine + a 1,2-diacyl-sn-glycerol</text>
        <dbReference type="Rhea" id="RHEA:42148"/>
        <dbReference type="ChEBI" id="CHEBI:17815"/>
        <dbReference type="ChEBI" id="CHEBI:31998"/>
        <dbReference type="ChEBI" id="CHEBI:64612"/>
        <dbReference type="ChEBI" id="CHEBI:78657"/>
    </reaction>
    <physiologicalReaction direction="left-to-right" evidence="2">
        <dbReference type="Rhea" id="RHEA:42149"/>
    </physiologicalReaction>
</comment>
<comment type="catalytic activity">
    <reaction evidence="2">
        <text>1,2-dihexadecanoyl-sn-glycero-3-phosphocholine + an N-acylsphing-4-enine = 1,2-dihexadecanoyl-sn-glycerol + a sphingomyelin</text>
        <dbReference type="Rhea" id="RHEA:43324"/>
        <dbReference type="ChEBI" id="CHEBI:17636"/>
        <dbReference type="ChEBI" id="CHEBI:52639"/>
        <dbReference type="ChEBI" id="CHEBI:72999"/>
        <dbReference type="ChEBI" id="CHEBI:82929"/>
    </reaction>
    <physiologicalReaction direction="left-to-right" evidence="2">
        <dbReference type="Rhea" id="RHEA:43325"/>
    </physiologicalReaction>
    <physiologicalReaction direction="right-to-left" evidence="2">
        <dbReference type="Rhea" id="RHEA:43326"/>
    </physiologicalReaction>
</comment>
<comment type="catalytic activity">
    <reaction evidence="2">
        <text>1-(9Z-octadecenoyl)-2-acyl-sn-3-glycerol + a sphingomyelin = a 1-(9Z-octadecenoyl)-2-acyl-sn-glycero-3-phosphocholine + an N-acylsphing-4-enine</text>
        <dbReference type="Rhea" id="RHEA:43320"/>
        <dbReference type="ChEBI" id="CHEBI:17636"/>
        <dbReference type="ChEBI" id="CHEBI:52639"/>
        <dbReference type="ChEBI" id="CHEBI:78421"/>
        <dbReference type="ChEBI" id="CHEBI:82983"/>
    </reaction>
    <physiologicalReaction direction="left-to-right" evidence="2">
        <dbReference type="Rhea" id="RHEA:43321"/>
    </physiologicalReaction>
    <physiologicalReaction direction="right-to-left" evidence="2">
        <dbReference type="Rhea" id="RHEA:43322"/>
    </physiologicalReaction>
</comment>
<comment type="catalytic activity">
    <reaction evidence="2">
        <text>N-hexadecanoylsphinganine + a 1,2-diacyl-sn-glycero-3-phosphocholine = N-hexadecanoyl-sphinganine-1-phosphocholine + a 1,2-diacyl-sn-glycerol</text>
        <dbReference type="Rhea" id="RHEA:41796"/>
        <dbReference type="ChEBI" id="CHEBI:17815"/>
        <dbReference type="ChEBI" id="CHEBI:57643"/>
        <dbReference type="ChEBI" id="CHEBI:67042"/>
        <dbReference type="ChEBI" id="CHEBI:78647"/>
    </reaction>
    <physiologicalReaction direction="left-to-right" evidence="2">
        <dbReference type="Rhea" id="RHEA:41797"/>
    </physiologicalReaction>
    <physiologicalReaction direction="right-to-left" evidence="2">
        <dbReference type="Rhea" id="RHEA:41798"/>
    </physiologicalReaction>
</comment>
<comment type="catalytic activity">
    <reaction evidence="2">
        <text>N-hexadecanoyl-(4R)-hydroxysphinganine + a 1,2-diacyl-sn-glycero-3-phosphocholine = N-hexadecanoyl-(4R)-hydroxysphinganine-phosphocholine + a 1,2-diacyl-sn-glycerol</text>
        <dbReference type="Rhea" id="RHEA:42140"/>
        <dbReference type="ChEBI" id="CHEBI:17815"/>
        <dbReference type="ChEBI" id="CHEBI:57643"/>
        <dbReference type="ChEBI" id="CHEBI:65107"/>
        <dbReference type="ChEBI" id="CHEBI:78650"/>
    </reaction>
    <physiologicalReaction direction="left-to-right" evidence="2">
        <dbReference type="Rhea" id="RHEA:42141"/>
    </physiologicalReaction>
    <physiologicalReaction direction="right-to-left" evidence="2">
        <dbReference type="Rhea" id="RHEA:42142"/>
    </physiologicalReaction>
</comment>
<comment type="catalytic activity">
    <reaction evidence="2">
        <text>N-hexadecanoylsphinganine + a 1,2-diacyl-sn-glycero-3-phosphoethanolamine = N-hexadecanoyl-sphinganine-1-phosphoethanolamine + a 1,2-diacyl-sn-glycerol</text>
        <dbReference type="Rhea" id="RHEA:42128"/>
        <dbReference type="ChEBI" id="CHEBI:17815"/>
        <dbReference type="ChEBI" id="CHEBI:64612"/>
        <dbReference type="ChEBI" id="CHEBI:67042"/>
        <dbReference type="ChEBI" id="CHEBI:78654"/>
    </reaction>
    <physiologicalReaction direction="left-to-right" evidence="2">
        <dbReference type="Rhea" id="RHEA:42129"/>
    </physiologicalReaction>
</comment>
<comment type="catalytic activity">
    <reaction evidence="2">
        <text>N-hexadecanoyl-(4R)-hydroxysphinganine + a 1,2-diacyl-sn-glycero-3-phosphoethanolamine = N-hexadecanoyl-(4R)-hydroxysphinganine-1-phosphoethanolamine + a 1,2-diacyl-sn-glycerol</text>
        <dbReference type="Rhea" id="RHEA:42144"/>
        <dbReference type="ChEBI" id="CHEBI:17815"/>
        <dbReference type="ChEBI" id="CHEBI:64612"/>
        <dbReference type="ChEBI" id="CHEBI:65107"/>
        <dbReference type="ChEBI" id="CHEBI:78656"/>
    </reaction>
    <physiologicalReaction direction="left-to-right" evidence="2">
        <dbReference type="Rhea" id="RHEA:42145"/>
    </physiologicalReaction>
</comment>
<comment type="pathway">
    <text evidence="2">Sphingolipid metabolism.</text>
</comment>
<comment type="subcellular location">
    <subcellularLocation>
        <location evidence="2">Cell membrane</location>
        <topology evidence="4">Multi-pass membrane protein</topology>
    </subcellularLocation>
    <subcellularLocation>
        <location evidence="2">Golgi apparatus membrane</location>
        <topology evidence="4">Multi-pass membrane protein</topology>
    </subcellularLocation>
    <text evidence="2">Primarily localized at the plasma membrane with a small fraction at the Golgi apparatus.</text>
</comment>
<comment type="tissue specificity">
    <text evidence="6">Expression restricted to late round spermatids and elongating spermatids but not detected in late elongate spermatids and Sertoli cells (at protein level).</text>
</comment>
<comment type="PTM">
    <text evidence="1">Palmitoylated on Cys-331, Cys-332, Cys-343 and Cys-348; which plays an important role in plasma membrane localization.</text>
</comment>
<comment type="similarity">
    <text evidence="8">Belongs to the sphingomyelin synthase family.</text>
</comment>
<evidence type="ECO:0000250" key="1"/>
<evidence type="ECO:0000250" key="2">
    <source>
        <dbReference type="UniProtKB" id="Q8NHU3"/>
    </source>
</evidence>
<evidence type="ECO:0000250" key="3">
    <source>
        <dbReference type="UniProtKB" id="Q9D4B1"/>
    </source>
</evidence>
<evidence type="ECO:0000255" key="4"/>
<evidence type="ECO:0000256" key="5">
    <source>
        <dbReference type="SAM" id="MobiDB-lite"/>
    </source>
</evidence>
<evidence type="ECO:0000269" key="6">
    <source>
    </source>
</evidence>
<evidence type="ECO:0000269" key="7">
    <source>
    </source>
</evidence>
<evidence type="ECO:0000305" key="8"/>